<reference key="1">
    <citation type="journal article" date="2006" name="BMC Genomics">
        <title>Complete genome sequence of Shigella flexneri 5b and comparison with Shigella flexneri 2a.</title>
        <authorList>
            <person name="Nie H."/>
            <person name="Yang F."/>
            <person name="Zhang X."/>
            <person name="Yang J."/>
            <person name="Chen L."/>
            <person name="Wang J."/>
            <person name="Xiong Z."/>
            <person name="Peng J."/>
            <person name="Sun L."/>
            <person name="Dong J."/>
            <person name="Xue Y."/>
            <person name="Xu X."/>
            <person name="Chen S."/>
            <person name="Yao Z."/>
            <person name="Shen Y."/>
            <person name="Jin Q."/>
        </authorList>
    </citation>
    <scope>NUCLEOTIDE SEQUENCE [LARGE SCALE GENOMIC DNA]</scope>
    <source>
        <strain>8401</strain>
    </source>
</reference>
<proteinExistence type="inferred from homology"/>
<feature type="chain" id="PRO_0000335870" description="3-octaprenyl-4-hydroxybenzoate carboxy-lyase">
    <location>
        <begin position="1"/>
        <end position="494"/>
    </location>
</feature>
<feature type="active site" description="Proton donor" evidence="1">
    <location>
        <position position="287"/>
    </location>
</feature>
<feature type="binding site" evidence="1">
    <location>
        <position position="172"/>
    </location>
    <ligand>
        <name>Mn(2+)</name>
        <dbReference type="ChEBI" id="CHEBI:29035"/>
    </ligand>
</feature>
<feature type="binding site" evidence="1">
    <location>
        <begin position="175"/>
        <end position="177"/>
    </location>
    <ligand>
        <name>prenylated FMN</name>
        <dbReference type="ChEBI" id="CHEBI:87746"/>
    </ligand>
</feature>
<feature type="binding site" evidence="1">
    <location>
        <begin position="189"/>
        <end position="191"/>
    </location>
    <ligand>
        <name>prenylated FMN</name>
        <dbReference type="ChEBI" id="CHEBI:87746"/>
    </ligand>
</feature>
<feature type="binding site" evidence="1">
    <location>
        <begin position="194"/>
        <end position="195"/>
    </location>
    <ligand>
        <name>prenylated FMN</name>
        <dbReference type="ChEBI" id="CHEBI:87746"/>
    </ligand>
</feature>
<feature type="binding site" evidence="1">
    <location>
        <position position="238"/>
    </location>
    <ligand>
        <name>Mn(2+)</name>
        <dbReference type="ChEBI" id="CHEBI:29035"/>
    </ligand>
</feature>
<comment type="function">
    <text evidence="1">Catalyzes the decarboxylation of 3-octaprenyl-4-hydroxy benzoate to 2-octaprenylphenol, an intermediate step in ubiquinone biosynthesis.</text>
</comment>
<comment type="catalytic activity">
    <reaction evidence="1">
        <text>a 4-hydroxy-3-(all-trans-polyprenyl)benzoate + H(+) = a 2-(all-trans-polyprenyl)phenol + CO2</text>
        <dbReference type="Rhea" id="RHEA:41680"/>
        <dbReference type="Rhea" id="RHEA-COMP:9514"/>
        <dbReference type="Rhea" id="RHEA-COMP:9516"/>
        <dbReference type="ChEBI" id="CHEBI:1269"/>
        <dbReference type="ChEBI" id="CHEBI:15378"/>
        <dbReference type="ChEBI" id="CHEBI:16526"/>
        <dbReference type="ChEBI" id="CHEBI:78396"/>
        <dbReference type="EC" id="4.1.1.98"/>
    </reaction>
</comment>
<comment type="cofactor">
    <cofactor evidence="1">
        <name>prenylated FMN</name>
        <dbReference type="ChEBI" id="CHEBI:87746"/>
    </cofactor>
    <text evidence="1">Binds 1 prenylated FMN per subunit.</text>
</comment>
<comment type="cofactor">
    <cofactor evidence="1">
        <name>Mn(2+)</name>
        <dbReference type="ChEBI" id="CHEBI:29035"/>
    </cofactor>
</comment>
<comment type="pathway">
    <text evidence="1">Cofactor biosynthesis; ubiquinone biosynthesis.</text>
</comment>
<comment type="subunit">
    <text evidence="1">Homohexamer.</text>
</comment>
<comment type="subcellular location">
    <subcellularLocation>
        <location evidence="1">Cell membrane</location>
        <topology evidence="1">Peripheral membrane protein</topology>
    </subcellularLocation>
</comment>
<comment type="similarity">
    <text evidence="1">Belongs to the UbiD family.</text>
</comment>
<comment type="sequence caution" evidence="2">
    <conflict type="erroneous initiation">
        <sequence resource="EMBL-CDS" id="ABF05682"/>
    </conflict>
</comment>
<evidence type="ECO:0000255" key="1">
    <source>
        <dbReference type="HAMAP-Rule" id="MF_01636"/>
    </source>
</evidence>
<evidence type="ECO:0000305" key="2"/>
<accession>Q0SZ33</accession>
<organism>
    <name type="scientific">Shigella flexneri serotype 5b (strain 8401)</name>
    <dbReference type="NCBI Taxonomy" id="373384"/>
    <lineage>
        <taxon>Bacteria</taxon>
        <taxon>Pseudomonadati</taxon>
        <taxon>Pseudomonadota</taxon>
        <taxon>Gammaproteobacteria</taxon>
        <taxon>Enterobacterales</taxon>
        <taxon>Enterobacteriaceae</taxon>
        <taxon>Shigella</taxon>
    </lineage>
</organism>
<name>UBID_SHIF8</name>
<gene>
    <name evidence="1" type="primary">ubiD</name>
    <name type="ordered locus">SFV_3657</name>
</gene>
<sequence length="494" mass="55329">MKYNDLRDFLTLLEQQGELKRITLPVDPHLEITEIADRTLRAGGPALLFENPKGYSMPVLCNLFGTPKRVAMGMGQEDVSALREVGKLLAFLKEPEPPKGFRDLFDKLPQFKQVLNMPTKRLRGAPCQQKIVSGDDVDLNRIPIMTCWPEDAAPLITWGLTVTRGPHKERQNLGIYRQQLIGKNKLIMRWLSHRGGALDYQEWCAAHPGERFPVSVALGADPATILGAVTPVPDTLSEYAFAGLLRGTKTEVVKCISNDLEVPASAEIVLEGYIDPDEMAPEGPYGDHTGYYNEVDSFPVFTVTHITQREDAIYHSTYTGRPPDEPAVLGVALNEVFVPILQKQFPEIVDFYLPPEGCSYRLAVVTIKKQYAGHAKRVMMGVWSFLRQFMYTKFVIVCDDDVNARDWNDVIWAITTRMDPARDTVLVENTPIDYLDFASPVSGLGSKMGLDATNKWPGETQREWGRPIKKDPDVVAHIDAIWDELAIFNNGKSA</sequence>
<protein>
    <recommendedName>
        <fullName evidence="1">3-octaprenyl-4-hydroxybenzoate carboxy-lyase</fullName>
        <ecNumber evidence="1">4.1.1.98</ecNumber>
    </recommendedName>
    <alternativeName>
        <fullName evidence="1">Polyprenyl p-hydroxybenzoate decarboxylase</fullName>
    </alternativeName>
</protein>
<dbReference type="EC" id="4.1.1.98" evidence="1"/>
<dbReference type="EMBL" id="CP000266">
    <property type="protein sequence ID" value="ABF05682.1"/>
    <property type="status" value="ALT_INIT"/>
    <property type="molecule type" value="Genomic_DNA"/>
</dbReference>
<dbReference type="SMR" id="Q0SZ33"/>
<dbReference type="KEGG" id="sfv:SFV_3657"/>
<dbReference type="HOGENOM" id="CLU_023348_4_1_6"/>
<dbReference type="UniPathway" id="UPA00232"/>
<dbReference type="Proteomes" id="UP000000659">
    <property type="component" value="Chromosome"/>
</dbReference>
<dbReference type="GO" id="GO:0005829">
    <property type="term" value="C:cytosol"/>
    <property type="evidence" value="ECO:0007669"/>
    <property type="project" value="TreeGrafter"/>
</dbReference>
<dbReference type="GO" id="GO:0005886">
    <property type="term" value="C:plasma membrane"/>
    <property type="evidence" value="ECO:0007669"/>
    <property type="project" value="UniProtKB-SubCell"/>
</dbReference>
<dbReference type="GO" id="GO:0008694">
    <property type="term" value="F:3-octaprenyl-4-hydroxybenzoate carboxy-lyase activity"/>
    <property type="evidence" value="ECO:0007669"/>
    <property type="project" value="UniProtKB-UniRule"/>
</dbReference>
<dbReference type="GO" id="GO:0046872">
    <property type="term" value="F:metal ion binding"/>
    <property type="evidence" value="ECO:0007669"/>
    <property type="project" value="UniProtKB-KW"/>
</dbReference>
<dbReference type="GO" id="GO:0006744">
    <property type="term" value="P:ubiquinone biosynthetic process"/>
    <property type="evidence" value="ECO:0007669"/>
    <property type="project" value="UniProtKB-UniRule"/>
</dbReference>
<dbReference type="FunFam" id="1.20.5.570:FF:000001">
    <property type="entry name" value="3-octaprenyl-4-hydroxybenzoate carboxy-lyase"/>
    <property type="match status" value="1"/>
</dbReference>
<dbReference type="FunFam" id="3.40.1670.10:FF:000001">
    <property type="entry name" value="3-octaprenyl-4-hydroxybenzoate carboxy-lyase"/>
    <property type="match status" value="1"/>
</dbReference>
<dbReference type="Gene3D" id="1.20.5.570">
    <property type="entry name" value="Single helix bin"/>
    <property type="match status" value="1"/>
</dbReference>
<dbReference type="Gene3D" id="3.40.1670.10">
    <property type="entry name" value="UbiD C-terminal domain-like"/>
    <property type="match status" value="1"/>
</dbReference>
<dbReference type="HAMAP" id="MF_01636">
    <property type="entry name" value="UbiD"/>
    <property type="match status" value="1"/>
</dbReference>
<dbReference type="InterPro" id="IPR002830">
    <property type="entry name" value="UbiD"/>
</dbReference>
<dbReference type="InterPro" id="IPR049381">
    <property type="entry name" value="UbiD-like_C"/>
</dbReference>
<dbReference type="InterPro" id="IPR049383">
    <property type="entry name" value="UbiD-like_N"/>
</dbReference>
<dbReference type="InterPro" id="IPR023677">
    <property type="entry name" value="UbiD_bacteria"/>
</dbReference>
<dbReference type="InterPro" id="IPR048304">
    <property type="entry name" value="UbiD_Rift_dom"/>
</dbReference>
<dbReference type="NCBIfam" id="NF008175">
    <property type="entry name" value="PRK10922.1"/>
    <property type="match status" value="1"/>
</dbReference>
<dbReference type="NCBIfam" id="TIGR00148">
    <property type="entry name" value="UbiD family decarboxylase"/>
    <property type="match status" value="1"/>
</dbReference>
<dbReference type="PANTHER" id="PTHR30108">
    <property type="entry name" value="3-OCTAPRENYL-4-HYDROXYBENZOATE CARBOXY-LYASE-RELATED"/>
    <property type="match status" value="1"/>
</dbReference>
<dbReference type="PANTHER" id="PTHR30108:SF17">
    <property type="entry name" value="FERULIC ACID DECARBOXYLASE 1"/>
    <property type="match status" value="1"/>
</dbReference>
<dbReference type="Pfam" id="PF01977">
    <property type="entry name" value="UbiD"/>
    <property type="match status" value="1"/>
</dbReference>
<dbReference type="Pfam" id="PF20696">
    <property type="entry name" value="UbiD_C"/>
    <property type="match status" value="1"/>
</dbReference>
<dbReference type="Pfam" id="PF20695">
    <property type="entry name" value="UbiD_N"/>
    <property type="match status" value="1"/>
</dbReference>
<dbReference type="SUPFAM" id="SSF50475">
    <property type="entry name" value="FMN-binding split barrel"/>
    <property type="match status" value="1"/>
</dbReference>
<dbReference type="SUPFAM" id="SSF143968">
    <property type="entry name" value="UbiD C-terminal domain-like"/>
    <property type="match status" value="1"/>
</dbReference>
<keyword id="KW-1003">Cell membrane</keyword>
<keyword id="KW-0210">Decarboxylase</keyword>
<keyword id="KW-0285">Flavoprotein</keyword>
<keyword id="KW-0288">FMN</keyword>
<keyword id="KW-0456">Lyase</keyword>
<keyword id="KW-0464">Manganese</keyword>
<keyword id="KW-0472">Membrane</keyword>
<keyword id="KW-0479">Metal-binding</keyword>
<keyword id="KW-0831">Ubiquinone biosynthesis</keyword>